<reference key="1">
    <citation type="journal article" date="1996" name="Microbiology">
        <title>Systematic sequencing of the 283 kb 210 degrees-232 degrees region of the Bacillus subtilis genome containing the skin element and many sporulation genes.</title>
        <authorList>
            <person name="Mizuno M."/>
            <person name="Masuda S."/>
            <person name="Takemaru K."/>
            <person name="Hosono S."/>
            <person name="Sato T."/>
            <person name="Takeuchi M."/>
            <person name="Kobayashi Y."/>
        </authorList>
    </citation>
    <scope>NUCLEOTIDE SEQUENCE [GENOMIC DNA]</scope>
    <source>
        <strain>168 / JH642</strain>
    </source>
</reference>
<reference key="2">
    <citation type="journal article" date="1997" name="Nature">
        <title>The complete genome sequence of the Gram-positive bacterium Bacillus subtilis.</title>
        <authorList>
            <person name="Kunst F."/>
            <person name="Ogasawara N."/>
            <person name="Moszer I."/>
            <person name="Albertini A.M."/>
            <person name="Alloni G."/>
            <person name="Azevedo V."/>
            <person name="Bertero M.G."/>
            <person name="Bessieres P."/>
            <person name="Bolotin A."/>
            <person name="Borchert S."/>
            <person name="Borriss R."/>
            <person name="Boursier L."/>
            <person name="Brans A."/>
            <person name="Braun M."/>
            <person name="Brignell S.C."/>
            <person name="Bron S."/>
            <person name="Brouillet S."/>
            <person name="Bruschi C.V."/>
            <person name="Caldwell B."/>
            <person name="Capuano V."/>
            <person name="Carter N.M."/>
            <person name="Choi S.-K."/>
            <person name="Codani J.-J."/>
            <person name="Connerton I.F."/>
            <person name="Cummings N.J."/>
            <person name="Daniel R.A."/>
            <person name="Denizot F."/>
            <person name="Devine K.M."/>
            <person name="Duesterhoeft A."/>
            <person name="Ehrlich S.D."/>
            <person name="Emmerson P.T."/>
            <person name="Entian K.-D."/>
            <person name="Errington J."/>
            <person name="Fabret C."/>
            <person name="Ferrari E."/>
            <person name="Foulger D."/>
            <person name="Fritz C."/>
            <person name="Fujita M."/>
            <person name="Fujita Y."/>
            <person name="Fuma S."/>
            <person name="Galizzi A."/>
            <person name="Galleron N."/>
            <person name="Ghim S.-Y."/>
            <person name="Glaser P."/>
            <person name="Goffeau A."/>
            <person name="Golightly E.J."/>
            <person name="Grandi G."/>
            <person name="Guiseppi G."/>
            <person name="Guy B.J."/>
            <person name="Haga K."/>
            <person name="Haiech J."/>
            <person name="Harwood C.R."/>
            <person name="Henaut A."/>
            <person name="Hilbert H."/>
            <person name="Holsappel S."/>
            <person name="Hosono S."/>
            <person name="Hullo M.-F."/>
            <person name="Itaya M."/>
            <person name="Jones L.-M."/>
            <person name="Joris B."/>
            <person name="Karamata D."/>
            <person name="Kasahara Y."/>
            <person name="Klaerr-Blanchard M."/>
            <person name="Klein C."/>
            <person name="Kobayashi Y."/>
            <person name="Koetter P."/>
            <person name="Koningstein G."/>
            <person name="Krogh S."/>
            <person name="Kumano M."/>
            <person name="Kurita K."/>
            <person name="Lapidus A."/>
            <person name="Lardinois S."/>
            <person name="Lauber J."/>
            <person name="Lazarevic V."/>
            <person name="Lee S.-M."/>
            <person name="Levine A."/>
            <person name="Liu H."/>
            <person name="Masuda S."/>
            <person name="Mauel C."/>
            <person name="Medigue C."/>
            <person name="Medina N."/>
            <person name="Mellado R.P."/>
            <person name="Mizuno M."/>
            <person name="Moestl D."/>
            <person name="Nakai S."/>
            <person name="Noback M."/>
            <person name="Noone D."/>
            <person name="O'Reilly M."/>
            <person name="Ogawa K."/>
            <person name="Ogiwara A."/>
            <person name="Oudega B."/>
            <person name="Park S.-H."/>
            <person name="Parro V."/>
            <person name="Pohl T.M."/>
            <person name="Portetelle D."/>
            <person name="Porwollik S."/>
            <person name="Prescott A.M."/>
            <person name="Presecan E."/>
            <person name="Pujic P."/>
            <person name="Purnelle B."/>
            <person name="Rapoport G."/>
            <person name="Rey M."/>
            <person name="Reynolds S."/>
            <person name="Rieger M."/>
            <person name="Rivolta C."/>
            <person name="Rocha E."/>
            <person name="Roche B."/>
            <person name="Rose M."/>
            <person name="Sadaie Y."/>
            <person name="Sato T."/>
            <person name="Scanlan E."/>
            <person name="Schleich S."/>
            <person name="Schroeter R."/>
            <person name="Scoffone F."/>
            <person name="Sekiguchi J."/>
            <person name="Sekowska A."/>
            <person name="Seror S.J."/>
            <person name="Serror P."/>
            <person name="Shin B.-S."/>
            <person name="Soldo B."/>
            <person name="Sorokin A."/>
            <person name="Tacconi E."/>
            <person name="Takagi T."/>
            <person name="Takahashi H."/>
            <person name="Takemaru K."/>
            <person name="Takeuchi M."/>
            <person name="Tamakoshi A."/>
            <person name="Tanaka T."/>
            <person name="Terpstra P."/>
            <person name="Tognoni A."/>
            <person name="Tosato V."/>
            <person name="Uchiyama S."/>
            <person name="Vandenbol M."/>
            <person name="Vannier F."/>
            <person name="Vassarotti A."/>
            <person name="Viari A."/>
            <person name="Wambutt R."/>
            <person name="Wedler E."/>
            <person name="Wedler H."/>
            <person name="Weitzenegger T."/>
            <person name="Winters P."/>
            <person name="Wipat A."/>
            <person name="Yamamoto H."/>
            <person name="Yamane K."/>
            <person name="Yasumoto K."/>
            <person name="Yata K."/>
            <person name="Yoshida K."/>
            <person name="Yoshikawa H.-F."/>
            <person name="Zumstein E."/>
            <person name="Yoshikawa H."/>
            <person name="Danchin A."/>
        </authorList>
    </citation>
    <scope>NUCLEOTIDE SEQUENCE [LARGE SCALE GENOMIC DNA]</scope>
    <source>
        <strain>168</strain>
    </source>
</reference>
<feature type="chain" id="PRO_0000049834" description="Uncharacterized protein YqjT">
    <location>
        <begin position="1"/>
        <end position="128"/>
    </location>
</feature>
<feature type="domain" description="VOC" evidence="1">
    <location>
        <begin position="1"/>
        <end position="126"/>
    </location>
</feature>
<accession>P54557</accession>
<dbReference type="EMBL" id="D84432">
    <property type="protein sequence ID" value="BAA12626.1"/>
    <property type="molecule type" value="Genomic_DNA"/>
</dbReference>
<dbReference type="EMBL" id="AL009126">
    <property type="protein sequence ID" value="CAB14307.1"/>
    <property type="molecule type" value="Genomic_DNA"/>
</dbReference>
<dbReference type="PIR" id="D69965">
    <property type="entry name" value="D69965"/>
</dbReference>
<dbReference type="RefSeq" id="NP_390256.1">
    <property type="nucleotide sequence ID" value="NC_000964.3"/>
</dbReference>
<dbReference type="RefSeq" id="WP_004398989.1">
    <property type="nucleotide sequence ID" value="NZ_OZ025638.1"/>
</dbReference>
<dbReference type="SMR" id="P54557"/>
<dbReference type="FunCoup" id="P54557">
    <property type="interactions" value="50"/>
</dbReference>
<dbReference type="STRING" id="224308.BSU23750"/>
<dbReference type="PaxDb" id="224308-BSU23750"/>
<dbReference type="EnsemblBacteria" id="CAB14307">
    <property type="protein sequence ID" value="CAB14307"/>
    <property type="gene ID" value="BSU_23750"/>
</dbReference>
<dbReference type="GeneID" id="938703"/>
<dbReference type="KEGG" id="bsu:BSU23750"/>
<dbReference type="PATRIC" id="fig|224308.179.peg.2588"/>
<dbReference type="eggNOG" id="COG0346">
    <property type="taxonomic scope" value="Bacteria"/>
</dbReference>
<dbReference type="InParanoid" id="P54557"/>
<dbReference type="OrthoDB" id="5296884at2"/>
<dbReference type="PhylomeDB" id="P54557"/>
<dbReference type="BioCyc" id="BSUB:BSU23750-MONOMER"/>
<dbReference type="Proteomes" id="UP000001570">
    <property type="component" value="Chromosome"/>
</dbReference>
<dbReference type="CDD" id="cd07242">
    <property type="entry name" value="VOC_BsYqjT"/>
    <property type="match status" value="1"/>
</dbReference>
<dbReference type="Gene3D" id="3.10.180.10">
    <property type="entry name" value="2,3-Dihydroxybiphenyl 1,2-Dioxygenase, domain 1"/>
    <property type="match status" value="1"/>
</dbReference>
<dbReference type="InterPro" id="IPR051332">
    <property type="entry name" value="Fosfomycin_Res_Enzymes"/>
</dbReference>
<dbReference type="InterPro" id="IPR029068">
    <property type="entry name" value="Glyas_Bleomycin-R_OHBP_Dase"/>
</dbReference>
<dbReference type="InterPro" id="IPR037523">
    <property type="entry name" value="VOC"/>
</dbReference>
<dbReference type="PANTHER" id="PTHR36113:SF6">
    <property type="entry name" value="FOSFOMYCIN RESISTANCE PROTEIN FOSX"/>
    <property type="match status" value="1"/>
</dbReference>
<dbReference type="PANTHER" id="PTHR36113">
    <property type="entry name" value="LYASE, PUTATIVE-RELATED-RELATED"/>
    <property type="match status" value="1"/>
</dbReference>
<dbReference type="Pfam" id="PF13669">
    <property type="entry name" value="Glyoxalase_4"/>
    <property type="match status" value="1"/>
</dbReference>
<dbReference type="SUPFAM" id="SSF54593">
    <property type="entry name" value="Glyoxalase/Bleomycin resistance protein/Dihydroxybiphenyl dioxygenase"/>
    <property type="match status" value="1"/>
</dbReference>
<dbReference type="PROSITE" id="PS51819">
    <property type="entry name" value="VOC"/>
    <property type="match status" value="1"/>
</dbReference>
<proteinExistence type="predicted"/>
<name>YQJT_BACSU</name>
<keyword id="KW-1185">Reference proteome</keyword>
<gene>
    <name type="primary">yqjT</name>
    <name type="ordered locus">BSU23750</name>
</gene>
<protein>
    <recommendedName>
        <fullName>Uncharacterized protein YqjT</fullName>
    </recommendedName>
</protein>
<organism>
    <name type="scientific">Bacillus subtilis (strain 168)</name>
    <dbReference type="NCBI Taxonomy" id="224308"/>
    <lineage>
        <taxon>Bacteria</taxon>
        <taxon>Bacillati</taxon>
        <taxon>Bacillota</taxon>
        <taxon>Bacilli</taxon>
        <taxon>Bacillales</taxon>
        <taxon>Bacillaceae</taxon>
        <taxon>Bacillus</taxon>
    </lineage>
</organism>
<sequence>MHHIELYVSDLEASRRFWGWFLKELGYKEYQKWSSGISWKKDRFYLVIVQAKEPFLEPEYHRCRVGLNHLAFHAESKLQVDQMTEKLTAKGYRVLYRDRHPFAGGDGHYAVFCEDPDRIKVELVAPSC</sequence>
<evidence type="ECO:0000255" key="1">
    <source>
        <dbReference type="PROSITE-ProRule" id="PRU01163"/>
    </source>
</evidence>